<organism>
    <name type="scientific">Escherichia coli O157:H7</name>
    <dbReference type="NCBI Taxonomy" id="83334"/>
    <lineage>
        <taxon>Bacteria</taxon>
        <taxon>Pseudomonadati</taxon>
        <taxon>Pseudomonadota</taxon>
        <taxon>Gammaproteobacteria</taxon>
        <taxon>Enterobacterales</taxon>
        <taxon>Enterobacteriaceae</taxon>
        <taxon>Escherichia</taxon>
    </lineage>
</organism>
<gene>
    <name evidence="2" type="primary">murG</name>
    <name type="ordered locus">Z0100</name>
    <name type="ordered locus">ECs0094</name>
</gene>
<accession>Q8X9Y8</accession>
<feature type="initiator methionine" description="Removed" evidence="1">
    <location>
        <position position="1"/>
    </location>
</feature>
<feature type="chain" id="PRO_0000109172" description="UDP-N-acetylglucosamine--N-acetylmuramyl-(pentapeptide) pyrophosphoryl-undecaprenol N-acetylglucosamine transferase">
    <location>
        <begin position="2"/>
        <end position="355"/>
    </location>
</feature>
<feature type="binding site" evidence="2">
    <location>
        <begin position="15"/>
        <end position="17"/>
    </location>
    <ligand>
        <name>UDP-N-acetyl-alpha-D-glucosamine</name>
        <dbReference type="ChEBI" id="CHEBI:57705"/>
    </ligand>
</feature>
<feature type="binding site" evidence="2">
    <location>
        <position position="127"/>
    </location>
    <ligand>
        <name>UDP-N-acetyl-alpha-D-glucosamine</name>
        <dbReference type="ChEBI" id="CHEBI:57705"/>
    </ligand>
</feature>
<feature type="binding site" evidence="2">
    <location>
        <position position="163"/>
    </location>
    <ligand>
        <name>UDP-N-acetyl-alpha-D-glucosamine</name>
        <dbReference type="ChEBI" id="CHEBI:57705"/>
    </ligand>
</feature>
<feature type="binding site" evidence="2">
    <location>
        <position position="191"/>
    </location>
    <ligand>
        <name>UDP-N-acetyl-alpha-D-glucosamine</name>
        <dbReference type="ChEBI" id="CHEBI:57705"/>
    </ligand>
</feature>
<feature type="binding site" evidence="2">
    <location>
        <position position="244"/>
    </location>
    <ligand>
        <name>UDP-N-acetyl-alpha-D-glucosamine</name>
        <dbReference type="ChEBI" id="CHEBI:57705"/>
    </ligand>
</feature>
<feature type="binding site" evidence="2">
    <location>
        <begin position="263"/>
        <end position="268"/>
    </location>
    <ligand>
        <name>UDP-N-acetyl-alpha-D-glucosamine</name>
        <dbReference type="ChEBI" id="CHEBI:57705"/>
    </ligand>
</feature>
<feature type="binding site" evidence="2">
    <location>
        <position position="288"/>
    </location>
    <ligand>
        <name>UDP-N-acetyl-alpha-D-glucosamine</name>
        <dbReference type="ChEBI" id="CHEBI:57705"/>
    </ligand>
</feature>
<dbReference type="EC" id="2.4.1.227" evidence="2"/>
<dbReference type="EMBL" id="AE005174">
    <property type="protein sequence ID" value="AAG54394.1"/>
    <property type="molecule type" value="Genomic_DNA"/>
</dbReference>
<dbReference type="EMBL" id="BA000007">
    <property type="protein sequence ID" value="BAB33517.1"/>
    <property type="molecule type" value="Genomic_DNA"/>
</dbReference>
<dbReference type="PIR" id="F85491">
    <property type="entry name" value="F85491"/>
</dbReference>
<dbReference type="PIR" id="F90640">
    <property type="entry name" value="F90640"/>
</dbReference>
<dbReference type="RefSeq" id="NP_308121.1">
    <property type="nucleotide sequence ID" value="NC_002695.1"/>
</dbReference>
<dbReference type="RefSeq" id="WP_001275836.1">
    <property type="nucleotide sequence ID" value="NZ_VOAI01000002.1"/>
</dbReference>
<dbReference type="SMR" id="Q8X9Y8"/>
<dbReference type="STRING" id="155864.Z0100"/>
<dbReference type="CAZy" id="GT28">
    <property type="family name" value="Glycosyltransferase Family 28"/>
</dbReference>
<dbReference type="GeneID" id="913552"/>
<dbReference type="KEGG" id="ece:Z0100"/>
<dbReference type="KEGG" id="ecs:ECs_0094"/>
<dbReference type="PATRIC" id="fig|386585.9.peg.194"/>
<dbReference type="eggNOG" id="COG0707">
    <property type="taxonomic scope" value="Bacteria"/>
</dbReference>
<dbReference type="HOGENOM" id="CLU_037404_2_0_6"/>
<dbReference type="OMA" id="AADMMLC"/>
<dbReference type="UniPathway" id="UPA00219"/>
<dbReference type="Proteomes" id="UP000000558">
    <property type="component" value="Chromosome"/>
</dbReference>
<dbReference type="Proteomes" id="UP000002519">
    <property type="component" value="Chromosome"/>
</dbReference>
<dbReference type="GO" id="GO:0005886">
    <property type="term" value="C:plasma membrane"/>
    <property type="evidence" value="ECO:0007669"/>
    <property type="project" value="UniProtKB-SubCell"/>
</dbReference>
<dbReference type="GO" id="GO:0051991">
    <property type="term" value="F:UDP-N-acetyl-D-glucosamine:N-acetylmuramoyl-L-alanyl-D-glutamyl-meso-2,6-diaminopimelyl-D-alanyl-D-alanine-diphosphoundecaprenol 4-beta-N-acetylglucosaminlytransferase activity"/>
    <property type="evidence" value="ECO:0007669"/>
    <property type="project" value="RHEA"/>
</dbReference>
<dbReference type="GO" id="GO:0050511">
    <property type="term" value="F:undecaprenyldiphospho-muramoylpentapeptide beta-N-acetylglucosaminyltransferase activity"/>
    <property type="evidence" value="ECO:0007669"/>
    <property type="project" value="UniProtKB-UniRule"/>
</dbReference>
<dbReference type="GO" id="GO:0005975">
    <property type="term" value="P:carbohydrate metabolic process"/>
    <property type="evidence" value="ECO:0007669"/>
    <property type="project" value="InterPro"/>
</dbReference>
<dbReference type="GO" id="GO:0051301">
    <property type="term" value="P:cell division"/>
    <property type="evidence" value="ECO:0007669"/>
    <property type="project" value="UniProtKB-KW"/>
</dbReference>
<dbReference type="GO" id="GO:0071555">
    <property type="term" value="P:cell wall organization"/>
    <property type="evidence" value="ECO:0007669"/>
    <property type="project" value="UniProtKB-KW"/>
</dbReference>
<dbReference type="GO" id="GO:0030259">
    <property type="term" value="P:lipid glycosylation"/>
    <property type="evidence" value="ECO:0007669"/>
    <property type="project" value="UniProtKB-UniRule"/>
</dbReference>
<dbReference type="GO" id="GO:0009252">
    <property type="term" value="P:peptidoglycan biosynthetic process"/>
    <property type="evidence" value="ECO:0007669"/>
    <property type="project" value="UniProtKB-UniRule"/>
</dbReference>
<dbReference type="GO" id="GO:0008360">
    <property type="term" value="P:regulation of cell shape"/>
    <property type="evidence" value="ECO:0007669"/>
    <property type="project" value="UniProtKB-KW"/>
</dbReference>
<dbReference type="CDD" id="cd03785">
    <property type="entry name" value="GT28_MurG"/>
    <property type="match status" value="1"/>
</dbReference>
<dbReference type="FunFam" id="3.40.50.2000:FF:000016">
    <property type="entry name" value="UDP-N-acetylglucosamine--N-acetylmuramyl-(pentapeptide) pyrophosphoryl-undecaprenol N-acetylglucosamine transferase"/>
    <property type="match status" value="1"/>
</dbReference>
<dbReference type="FunFam" id="3.40.50.2000:FF:000018">
    <property type="entry name" value="UDP-N-acetylglucosamine--N-acetylmuramyl-(pentapeptide) pyrophosphoryl-undecaprenol N-acetylglucosamine transferase"/>
    <property type="match status" value="1"/>
</dbReference>
<dbReference type="Gene3D" id="3.40.50.2000">
    <property type="entry name" value="Glycogen Phosphorylase B"/>
    <property type="match status" value="2"/>
</dbReference>
<dbReference type="HAMAP" id="MF_00033">
    <property type="entry name" value="MurG"/>
    <property type="match status" value="1"/>
</dbReference>
<dbReference type="InterPro" id="IPR006009">
    <property type="entry name" value="GlcNAc_MurG"/>
</dbReference>
<dbReference type="InterPro" id="IPR007235">
    <property type="entry name" value="Glyco_trans_28_C"/>
</dbReference>
<dbReference type="InterPro" id="IPR004276">
    <property type="entry name" value="GlycoTrans_28_N"/>
</dbReference>
<dbReference type="NCBIfam" id="TIGR01133">
    <property type="entry name" value="murG"/>
    <property type="match status" value="1"/>
</dbReference>
<dbReference type="PANTHER" id="PTHR21015:SF22">
    <property type="entry name" value="GLYCOSYLTRANSFERASE"/>
    <property type="match status" value="1"/>
</dbReference>
<dbReference type="PANTHER" id="PTHR21015">
    <property type="entry name" value="UDP-N-ACETYLGLUCOSAMINE--N-ACETYLMURAMYL-(PENTAPEPTIDE) PYROPHOSPHORYL-UNDECAPRENOL N-ACETYLGLUCOSAMINE TRANSFERASE 1"/>
    <property type="match status" value="1"/>
</dbReference>
<dbReference type="Pfam" id="PF04101">
    <property type="entry name" value="Glyco_tran_28_C"/>
    <property type="match status" value="1"/>
</dbReference>
<dbReference type="Pfam" id="PF03033">
    <property type="entry name" value="Glyco_transf_28"/>
    <property type="match status" value="1"/>
</dbReference>
<dbReference type="SUPFAM" id="SSF53756">
    <property type="entry name" value="UDP-Glycosyltransferase/glycogen phosphorylase"/>
    <property type="match status" value="1"/>
</dbReference>
<keyword id="KW-0131">Cell cycle</keyword>
<keyword id="KW-0132">Cell division</keyword>
<keyword id="KW-0997">Cell inner membrane</keyword>
<keyword id="KW-1003">Cell membrane</keyword>
<keyword id="KW-0133">Cell shape</keyword>
<keyword id="KW-0961">Cell wall biogenesis/degradation</keyword>
<keyword id="KW-0328">Glycosyltransferase</keyword>
<keyword id="KW-0472">Membrane</keyword>
<keyword id="KW-0573">Peptidoglycan synthesis</keyword>
<keyword id="KW-1185">Reference proteome</keyword>
<keyword id="KW-0808">Transferase</keyword>
<name>MURG_ECO57</name>
<evidence type="ECO:0000250" key="1"/>
<evidence type="ECO:0000255" key="2">
    <source>
        <dbReference type="HAMAP-Rule" id="MF_00033"/>
    </source>
</evidence>
<sequence length="355" mass="37801">MSAQGKRLMVMAGGTGGHVFPGLAVAHHLMAQGWQVRWLGTADRMEADLVPKHGIEIDFIRISGLRGKGIKALIAAPLRIFNAWRQARAIMKAYKPDVVLGMGGYVSGPGGLAAWSLGIPVVLHEQNGIAGLTNKWLAKIATKVMQAFPGAFPNAEVVGNPVRTDVLALPLPQQRLAGREGPVRVLVVGGSQGARILNQTMPQVAAKLGDSVTIWHQSGKGSQQSVEQAYAEAGQPQHKVTEFIDDMAAAYAWADVVVCRSGALTVSEIAAAGLPALFVPFQHKDRQQYWNALPLEKAGAAKIIEQPQLSVDAVANTLAGWSRETLLTMAERARAASIPDATERVANEVSRAARA</sequence>
<comment type="function">
    <text evidence="2">Cell wall formation. Catalyzes the transfer of a GlcNAc subunit on undecaprenyl-pyrophosphoryl-MurNAc-pentapeptide (lipid intermediate I) to form undecaprenyl-pyrophosphoryl-MurNAc-(pentapeptide)GlcNAc (lipid intermediate II).</text>
</comment>
<comment type="catalytic activity">
    <reaction evidence="2">
        <text>di-trans,octa-cis-undecaprenyl diphospho-N-acetyl-alpha-D-muramoyl-L-alanyl-D-glutamyl-meso-2,6-diaminopimeloyl-D-alanyl-D-alanine + UDP-N-acetyl-alpha-D-glucosamine = di-trans,octa-cis-undecaprenyl diphospho-[N-acetyl-alpha-D-glucosaminyl-(1-&gt;4)]-N-acetyl-alpha-D-muramoyl-L-alanyl-D-glutamyl-meso-2,6-diaminopimeloyl-D-alanyl-D-alanine + UDP + H(+)</text>
        <dbReference type="Rhea" id="RHEA:31227"/>
        <dbReference type="ChEBI" id="CHEBI:15378"/>
        <dbReference type="ChEBI" id="CHEBI:57705"/>
        <dbReference type="ChEBI" id="CHEBI:58223"/>
        <dbReference type="ChEBI" id="CHEBI:61387"/>
        <dbReference type="ChEBI" id="CHEBI:61388"/>
        <dbReference type="EC" id="2.4.1.227"/>
    </reaction>
</comment>
<comment type="pathway">
    <text evidence="2">Cell wall biogenesis; peptidoglycan biosynthesis.</text>
</comment>
<comment type="subcellular location">
    <subcellularLocation>
        <location evidence="2">Cell inner membrane</location>
        <topology evidence="2">Peripheral membrane protein</topology>
        <orientation evidence="2">Cytoplasmic side</orientation>
    </subcellularLocation>
</comment>
<comment type="similarity">
    <text evidence="2">Belongs to the glycosyltransferase 28 family. MurG subfamily.</text>
</comment>
<protein>
    <recommendedName>
        <fullName evidence="2">UDP-N-acetylglucosamine--N-acetylmuramyl-(pentapeptide) pyrophosphoryl-undecaprenol N-acetylglucosamine transferase</fullName>
        <ecNumber evidence="2">2.4.1.227</ecNumber>
    </recommendedName>
    <alternativeName>
        <fullName evidence="2">Undecaprenyl-PP-MurNAc-pentapeptide-UDPGlcNAc GlcNAc transferase</fullName>
    </alternativeName>
</protein>
<proteinExistence type="inferred from homology"/>
<reference key="1">
    <citation type="journal article" date="2001" name="Nature">
        <title>Genome sequence of enterohaemorrhagic Escherichia coli O157:H7.</title>
        <authorList>
            <person name="Perna N.T."/>
            <person name="Plunkett G. III"/>
            <person name="Burland V."/>
            <person name="Mau B."/>
            <person name="Glasner J.D."/>
            <person name="Rose D.J."/>
            <person name="Mayhew G.F."/>
            <person name="Evans P.S."/>
            <person name="Gregor J."/>
            <person name="Kirkpatrick H.A."/>
            <person name="Posfai G."/>
            <person name="Hackett J."/>
            <person name="Klink S."/>
            <person name="Boutin A."/>
            <person name="Shao Y."/>
            <person name="Miller L."/>
            <person name="Grotbeck E.J."/>
            <person name="Davis N.W."/>
            <person name="Lim A."/>
            <person name="Dimalanta E.T."/>
            <person name="Potamousis K."/>
            <person name="Apodaca J."/>
            <person name="Anantharaman T.S."/>
            <person name="Lin J."/>
            <person name="Yen G."/>
            <person name="Schwartz D.C."/>
            <person name="Welch R.A."/>
            <person name="Blattner F.R."/>
        </authorList>
    </citation>
    <scope>NUCLEOTIDE SEQUENCE [LARGE SCALE GENOMIC DNA]</scope>
    <source>
        <strain>O157:H7 / EDL933 / ATCC 700927 / EHEC</strain>
    </source>
</reference>
<reference key="2">
    <citation type="journal article" date="2001" name="DNA Res.">
        <title>Complete genome sequence of enterohemorrhagic Escherichia coli O157:H7 and genomic comparison with a laboratory strain K-12.</title>
        <authorList>
            <person name="Hayashi T."/>
            <person name="Makino K."/>
            <person name="Ohnishi M."/>
            <person name="Kurokawa K."/>
            <person name="Ishii K."/>
            <person name="Yokoyama K."/>
            <person name="Han C.-G."/>
            <person name="Ohtsubo E."/>
            <person name="Nakayama K."/>
            <person name="Murata T."/>
            <person name="Tanaka M."/>
            <person name="Tobe T."/>
            <person name="Iida T."/>
            <person name="Takami H."/>
            <person name="Honda T."/>
            <person name="Sasakawa C."/>
            <person name="Ogasawara N."/>
            <person name="Yasunaga T."/>
            <person name="Kuhara S."/>
            <person name="Shiba T."/>
            <person name="Hattori M."/>
            <person name="Shinagawa H."/>
        </authorList>
    </citation>
    <scope>NUCLEOTIDE SEQUENCE [LARGE SCALE GENOMIC DNA]</scope>
    <source>
        <strain>O157:H7 / Sakai / RIMD 0509952 / EHEC</strain>
    </source>
</reference>